<feature type="chain" id="PRO_1000058010" description="Phosphoglycerate kinase">
    <location>
        <begin position="1"/>
        <end position="396"/>
    </location>
</feature>
<feature type="binding site" evidence="1">
    <location>
        <begin position="21"/>
        <end position="23"/>
    </location>
    <ligand>
        <name>substrate</name>
    </ligand>
</feature>
<feature type="binding site" evidence="1">
    <location>
        <position position="36"/>
    </location>
    <ligand>
        <name>substrate</name>
    </ligand>
</feature>
<feature type="binding site" evidence="1">
    <location>
        <begin position="59"/>
        <end position="62"/>
    </location>
    <ligand>
        <name>substrate</name>
    </ligand>
</feature>
<feature type="binding site" evidence="1">
    <location>
        <position position="118"/>
    </location>
    <ligand>
        <name>substrate</name>
    </ligand>
</feature>
<feature type="binding site" evidence="1">
    <location>
        <position position="151"/>
    </location>
    <ligand>
        <name>substrate</name>
    </ligand>
</feature>
<feature type="binding site" evidence="1">
    <location>
        <position position="201"/>
    </location>
    <ligand>
        <name>ATP</name>
        <dbReference type="ChEBI" id="CHEBI:30616"/>
    </ligand>
</feature>
<feature type="binding site" evidence="1">
    <location>
        <position position="292"/>
    </location>
    <ligand>
        <name>ATP</name>
        <dbReference type="ChEBI" id="CHEBI:30616"/>
    </ligand>
</feature>
<feature type="binding site" evidence="1">
    <location>
        <position position="323"/>
    </location>
    <ligand>
        <name>ATP</name>
        <dbReference type="ChEBI" id="CHEBI:30616"/>
    </ligand>
</feature>
<feature type="binding site" evidence="1">
    <location>
        <begin position="349"/>
        <end position="352"/>
    </location>
    <ligand>
        <name>ATP</name>
        <dbReference type="ChEBI" id="CHEBI:30616"/>
    </ligand>
</feature>
<protein>
    <recommendedName>
        <fullName evidence="1">Phosphoglycerate kinase</fullName>
        <ecNumber evidence="1">2.7.2.3</ecNumber>
    </recommendedName>
</protein>
<reference key="1">
    <citation type="journal article" date="2006" name="Proc. Natl. Acad. Sci. U.S.A.">
        <title>Genome reduction in Leptospira borgpetersenii reflects limited transmission potential.</title>
        <authorList>
            <person name="Bulach D.M."/>
            <person name="Zuerner R.L."/>
            <person name="Wilson P."/>
            <person name="Seemann T."/>
            <person name="McGrath A."/>
            <person name="Cullen P.A."/>
            <person name="Davis J."/>
            <person name="Johnson M."/>
            <person name="Kuczek E."/>
            <person name="Alt D.P."/>
            <person name="Peterson-Burch B."/>
            <person name="Coppel R.L."/>
            <person name="Rood J.I."/>
            <person name="Davies J.K."/>
            <person name="Adler B."/>
        </authorList>
    </citation>
    <scope>NUCLEOTIDE SEQUENCE [LARGE SCALE GENOMIC DNA]</scope>
    <source>
        <strain>L550</strain>
    </source>
</reference>
<sequence>MELPRLENVDLSGKRVFLRVDFNVPIENGKVTDKTRIEKTLPTIELLIKKGARIIIASHLGRPKGQTNPEFSLAPVVEVFKGLVKSNVYFSKTVIGDEPIKLSKELRDGEILVIENVRFHKEEEENEPGFSKKLAALADVYVNDAFGAAHRAHASTEGIAHLLPAYAGLLMHKEIVELSALLAKPARPFVAIIGGSKVSSKIKVLNNLFDKVNHLLIGGGMAYTFLKSRAVPVGNSLVEKDFEVQAFQLIEKAGVAGVDLQLPVDHIIGDQFNEKAKTKSVDKMGILDGWMGMDIGSKTVSNYEKIIKNAGTIFWNGPMGVFEMDKFTGGTMAIAKAISKSKAKTVVGGGDSIAAINKAKVADKITHISTGGGASLEFMEGRKLPGVEALKKKVSE</sequence>
<keyword id="KW-0067">ATP-binding</keyword>
<keyword id="KW-0963">Cytoplasm</keyword>
<keyword id="KW-0324">Glycolysis</keyword>
<keyword id="KW-0418">Kinase</keyword>
<keyword id="KW-0547">Nucleotide-binding</keyword>
<keyword id="KW-0808">Transferase</keyword>
<proteinExistence type="inferred from homology"/>
<organism>
    <name type="scientific">Leptospira borgpetersenii serovar Hardjo-bovis (strain L550)</name>
    <dbReference type="NCBI Taxonomy" id="355276"/>
    <lineage>
        <taxon>Bacteria</taxon>
        <taxon>Pseudomonadati</taxon>
        <taxon>Spirochaetota</taxon>
        <taxon>Spirochaetia</taxon>
        <taxon>Leptospirales</taxon>
        <taxon>Leptospiraceae</taxon>
        <taxon>Leptospira</taxon>
    </lineage>
</organism>
<gene>
    <name evidence="1" type="primary">pgk</name>
    <name type="ordered locus">LBL_1270</name>
</gene>
<evidence type="ECO:0000255" key="1">
    <source>
        <dbReference type="HAMAP-Rule" id="MF_00145"/>
    </source>
</evidence>
<dbReference type="EC" id="2.7.2.3" evidence="1"/>
<dbReference type="EMBL" id="CP000348">
    <property type="protein sequence ID" value="ABJ78768.1"/>
    <property type="molecule type" value="Genomic_DNA"/>
</dbReference>
<dbReference type="RefSeq" id="WP_011670000.1">
    <property type="nucleotide sequence ID" value="NC_008508.1"/>
</dbReference>
<dbReference type="SMR" id="Q052H7"/>
<dbReference type="KEGG" id="lbl:LBL_1270"/>
<dbReference type="HOGENOM" id="CLU_025427_0_2_12"/>
<dbReference type="UniPathway" id="UPA00109">
    <property type="reaction ID" value="UER00185"/>
</dbReference>
<dbReference type="GO" id="GO:0005829">
    <property type="term" value="C:cytosol"/>
    <property type="evidence" value="ECO:0007669"/>
    <property type="project" value="TreeGrafter"/>
</dbReference>
<dbReference type="GO" id="GO:0043531">
    <property type="term" value="F:ADP binding"/>
    <property type="evidence" value="ECO:0007669"/>
    <property type="project" value="TreeGrafter"/>
</dbReference>
<dbReference type="GO" id="GO:0005524">
    <property type="term" value="F:ATP binding"/>
    <property type="evidence" value="ECO:0007669"/>
    <property type="project" value="UniProtKB-KW"/>
</dbReference>
<dbReference type="GO" id="GO:0004618">
    <property type="term" value="F:phosphoglycerate kinase activity"/>
    <property type="evidence" value="ECO:0007669"/>
    <property type="project" value="UniProtKB-UniRule"/>
</dbReference>
<dbReference type="GO" id="GO:0006094">
    <property type="term" value="P:gluconeogenesis"/>
    <property type="evidence" value="ECO:0007669"/>
    <property type="project" value="TreeGrafter"/>
</dbReference>
<dbReference type="GO" id="GO:0006096">
    <property type="term" value="P:glycolytic process"/>
    <property type="evidence" value="ECO:0007669"/>
    <property type="project" value="UniProtKB-UniRule"/>
</dbReference>
<dbReference type="CDD" id="cd00318">
    <property type="entry name" value="Phosphoglycerate_kinase"/>
    <property type="match status" value="1"/>
</dbReference>
<dbReference type="FunFam" id="3.40.50.1260:FF:000002">
    <property type="entry name" value="Phosphoglycerate kinase"/>
    <property type="match status" value="1"/>
</dbReference>
<dbReference type="FunFam" id="3.40.50.1260:FF:000007">
    <property type="entry name" value="Phosphoglycerate kinase"/>
    <property type="match status" value="1"/>
</dbReference>
<dbReference type="Gene3D" id="3.40.50.1260">
    <property type="entry name" value="Phosphoglycerate kinase, N-terminal domain"/>
    <property type="match status" value="2"/>
</dbReference>
<dbReference type="HAMAP" id="MF_00145">
    <property type="entry name" value="Phosphoglyc_kinase"/>
    <property type="match status" value="1"/>
</dbReference>
<dbReference type="InterPro" id="IPR001576">
    <property type="entry name" value="Phosphoglycerate_kinase"/>
</dbReference>
<dbReference type="InterPro" id="IPR015911">
    <property type="entry name" value="Phosphoglycerate_kinase_CS"/>
</dbReference>
<dbReference type="InterPro" id="IPR015824">
    <property type="entry name" value="Phosphoglycerate_kinase_N"/>
</dbReference>
<dbReference type="InterPro" id="IPR036043">
    <property type="entry name" value="Phosphoglycerate_kinase_sf"/>
</dbReference>
<dbReference type="PANTHER" id="PTHR11406">
    <property type="entry name" value="PHOSPHOGLYCERATE KINASE"/>
    <property type="match status" value="1"/>
</dbReference>
<dbReference type="PANTHER" id="PTHR11406:SF23">
    <property type="entry name" value="PHOSPHOGLYCERATE KINASE 1, CHLOROPLASTIC-RELATED"/>
    <property type="match status" value="1"/>
</dbReference>
<dbReference type="Pfam" id="PF00162">
    <property type="entry name" value="PGK"/>
    <property type="match status" value="1"/>
</dbReference>
<dbReference type="PIRSF" id="PIRSF000724">
    <property type="entry name" value="Pgk"/>
    <property type="match status" value="1"/>
</dbReference>
<dbReference type="PRINTS" id="PR00477">
    <property type="entry name" value="PHGLYCKINASE"/>
</dbReference>
<dbReference type="SUPFAM" id="SSF53748">
    <property type="entry name" value="Phosphoglycerate kinase"/>
    <property type="match status" value="1"/>
</dbReference>
<dbReference type="PROSITE" id="PS00111">
    <property type="entry name" value="PGLYCERATE_KINASE"/>
    <property type="match status" value="1"/>
</dbReference>
<accession>Q052H7</accession>
<comment type="catalytic activity">
    <reaction evidence="1">
        <text>(2R)-3-phosphoglycerate + ATP = (2R)-3-phospho-glyceroyl phosphate + ADP</text>
        <dbReference type="Rhea" id="RHEA:14801"/>
        <dbReference type="ChEBI" id="CHEBI:30616"/>
        <dbReference type="ChEBI" id="CHEBI:57604"/>
        <dbReference type="ChEBI" id="CHEBI:58272"/>
        <dbReference type="ChEBI" id="CHEBI:456216"/>
        <dbReference type="EC" id="2.7.2.3"/>
    </reaction>
</comment>
<comment type="pathway">
    <text evidence="1">Carbohydrate degradation; glycolysis; pyruvate from D-glyceraldehyde 3-phosphate: step 2/5.</text>
</comment>
<comment type="subunit">
    <text evidence="1">Monomer.</text>
</comment>
<comment type="subcellular location">
    <subcellularLocation>
        <location evidence="1">Cytoplasm</location>
    </subcellularLocation>
</comment>
<comment type="similarity">
    <text evidence="1">Belongs to the phosphoglycerate kinase family.</text>
</comment>
<name>PGK_LEPBL</name>